<reference key="1">
    <citation type="journal article" date="2009" name="J. Bacteriol.">
        <title>The genome of Burkholderia cenocepacia J2315, an epidemic pathogen of cystic fibrosis patients.</title>
        <authorList>
            <person name="Holden M.T."/>
            <person name="Seth-Smith H.M."/>
            <person name="Crossman L.C."/>
            <person name="Sebaihia M."/>
            <person name="Bentley S.D."/>
            <person name="Cerdeno-Tarraga A.M."/>
            <person name="Thomson N.R."/>
            <person name="Bason N."/>
            <person name="Quail M.A."/>
            <person name="Sharp S."/>
            <person name="Cherevach I."/>
            <person name="Churcher C."/>
            <person name="Goodhead I."/>
            <person name="Hauser H."/>
            <person name="Holroyd N."/>
            <person name="Mungall K."/>
            <person name="Scott P."/>
            <person name="Walker D."/>
            <person name="White B."/>
            <person name="Rose H."/>
            <person name="Iversen P."/>
            <person name="Mil-Homens D."/>
            <person name="Rocha E.P."/>
            <person name="Fialho A.M."/>
            <person name="Baldwin A."/>
            <person name="Dowson C."/>
            <person name="Barrell B.G."/>
            <person name="Govan J.R."/>
            <person name="Vandamme P."/>
            <person name="Hart C.A."/>
            <person name="Mahenthiralingam E."/>
            <person name="Parkhill J."/>
        </authorList>
    </citation>
    <scope>NUCLEOTIDE SEQUENCE [LARGE SCALE GENOMIC DNA]</scope>
    <source>
        <strain>ATCC BAA-245 / DSM 16553 / LMG 16656 / NCTC 13227 / J2315 / CF5610</strain>
    </source>
</reference>
<gene>
    <name evidence="1" type="primary">pth</name>
    <name type="ordered locus">BceJ2315_07910</name>
    <name type="ORF">BCAL0798</name>
</gene>
<evidence type="ECO:0000255" key="1">
    <source>
        <dbReference type="HAMAP-Rule" id="MF_00083"/>
    </source>
</evidence>
<proteinExistence type="inferred from homology"/>
<accession>B4EAR1</accession>
<name>PTH_BURCJ</name>
<organism>
    <name type="scientific">Burkholderia cenocepacia (strain ATCC BAA-245 / DSM 16553 / LMG 16656 / NCTC 13227 / J2315 / CF5610)</name>
    <name type="common">Burkholderia cepacia (strain J2315)</name>
    <dbReference type="NCBI Taxonomy" id="216591"/>
    <lineage>
        <taxon>Bacteria</taxon>
        <taxon>Pseudomonadati</taxon>
        <taxon>Pseudomonadota</taxon>
        <taxon>Betaproteobacteria</taxon>
        <taxon>Burkholderiales</taxon>
        <taxon>Burkholderiaceae</taxon>
        <taxon>Burkholderia</taxon>
        <taxon>Burkholderia cepacia complex</taxon>
    </lineage>
</organism>
<keyword id="KW-0963">Cytoplasm</keyword>
<keyword id="KW-0378">Hydrolase</keyword>
<keyword id="KW-0694">RNA-binding</keyword>
<keyword id="KW-0820">tRNA-binding</keyword>
<dbReference type="EC" id="3.1.1.29" evidence="1"/>
<dbReference type="EMBL" id="AM747720">
    <property type="protein sequence ID" value="CAR51106.1"/>
    <property type="molecule type" value="Genomic_DNA"/>
</dbReference>
<dbReference type="RefSeq" id="WP_006477776.1">
    <property type="nucleotide sequence ID" value="NC_011000.1"/>
</dbReference>
<dbReference type="SMR" id="B4EAR1"/>
<dbReference type="GeneID" id="83049600"/>
<dbReference type="KEGG" id="bcj:BCAL0798"/>
<dbReference type="eggNOG" id="COG0193">
    <property type="taxonomic scope" value="Bacteria"/>
</dbReference>
<dbReference type="HOGENOM" id="CLU_062456_3_1_4"/>
<dbReference type="BioCyc" id="BCEN216591:G1G1V-891-MONOMER"/>
<dbReference type="Proteomes" id="UP000001035">
    <property type="component" value="Chromosome 1"/>
</dbReference>
<dbReference type="GO" id="GO:0005737">
    <property type="term" value="C:cytoplasm"/>
    <property type="evidence" value="ECO:0007669"/>
    <property type="project" value="UniProtKB-SubCell"/>
</dbReference>
<dbReference type="GO" id="GO:0004045">
    <property type="term" value="F:peptidyl-tRNA hydrolase activity"/>
    <property type="evidence" value="ECO:0007669"/>
    <property type="project" value="UniProtKB-UniRule"/>
</dbReference>
<dbReference type="GO" id="GO:0000049">
    <property type="term" value="F:tRNA binding"/>
    <property type="evidence" value="ECO:0007669"/>
    <property type="project" value="UniProtKB-UniRule"/>
</dbReference>
<dbReference type="GO" id="GO:0006515">
    <property type="term" value="P:protein quality control for misfolded or incompletely synthesized proteins"/>
    <property type="evidence" value="ECO:0007669"/>
    <property type="project" value="UniProtKB-UniRule"/>
</dbReference>
<dbReference type="GO" id="GO:0072344">
    <property type="term" value="P:rescue of stalled ribosome"/>
    <property type="evidence" value="ECO:0007669"/>
    <property type="project" value="UniProtKB-UniRule"/>
</dbReference>
<dbReference type="CDD" id="cd00462">
    <property type="entry name" value="PTH"/>
    <property type="match status" value="1"/>
</dbReference>
<dbReference type="FunFam" id="3.40.50.1470:FF:000001">
    <property type="entry name" value="Peptidyl-tRNA hydrolase"/>
    <property type="match status" value="1"/>
</dbReference>
<dbReference type="Gene3D" id="3.40.50.1470">
    <property type="entry name" value="Peptidyl-tRNA hydrolase"/>
    <property type="match status" value="1"/>
</dbReference>
<dbReference type="HAMAP" id="MF_00083">
    <property type="entry name" value="Pept_tRNA_hydro_bact"/>
    <property type="match status" value="1"/>
</dbReference>
<dbReference type="InterPro" id="IPR001328">
    <property type="entry name" value="Pept_tRNA_hydro"/>
</dbReference>
<dbReference type="InterPro" id="IPR018171">
    <property type="entry name" value="Pept_tRNA_hydro_CS"/>
</dbReference>
<dbReference type="InterPro" id="IPR036416">
    <property type="entry name" value="Pept_tRNA_hydro_sf"/>
</dbReference>
<dbReference type="NCBIfam" id="TIGR00447">
    <property type="entry name" value="pth"/>
    <property type="match status" value="1"/>
</dbReference>
<dbReference type="PANTHER" id="PTHR17224">
    <property type="entry name" value="PEPTIDYL-TRNA HYDROLASE"/>
    <property type="match status" value="1"/>
</dbReference>
<dbReference type="PANTHER" id="PTHR17224:SF1">
    <property type="entry name" value="PEPTIDYL-TRNA HYDROLASE"/>
    <property type="match status" value="1"/>
</dbReference>
<dbReference type="Pfam" id="PF01195">
    <property type="entry name" value="Pept_tRNA_hydro"/>
    <property type="match status" value="1"/>
</dbReference>
<dbReference type="SUPFAM" id="SSF53178">
    <property type="entry name" value="Peptidyl-tRNA hydrolase-like"/>
    <property type="match status" value="1"/>
</dbReference>
<dbReference type="PROSITE" id="PS01195">
    <property type="entry name" value="PEPT_TRNA_HYDROL_1"/>
    <property type="match status" value="1"/>
</dbReference>
<dbReference type="PROSITE" id="PS01196">
    <property type="entry name" value="PEPT_TRNA_HYDROL_2"/>
    <property type="match status" value="1"/>
</dbReference>
<sequence length="199" mass="22080">MIKLIVGLGNPGAEYTATRHNAGFWLIDQLAREAGTTLRDERRFHGFYAKARLHGEEVHLLEPQTYMNRSGQSVVALAQFFKILPDQILVAHDELDLPPGTVKLKLGGGSGGHNGLKDITAHLSSQQYWRLRIGIGHPRDLIPESARAGAKPDVANFVLKPPRREEQDVIDASIERALAVMPMVVKGELDRATMQLHRN</sequence>
<feature type="chain" id="PRO_1000092918" description="Peptidyl-tRNA hydrolase">
    <location>
        <begin position="1"/>
        <end position="199"/>
    </location>
</feature>
<feature type="active site" description="Proton acceptor" evidence="1">
    <location>
        <position position="20"/>
    </location>
</feature>
<feature type="binding site" evidence="1">
    <location>
        <position position="15"/>
    </location>
    <ligand>
        <name>tRNA</name>
        <dbReference type="ChEBI" id="CHEBI:17843"/>
    </ligand>
</feature>
<feature type="binding site" evidence="1">
    <location>
        <position position="66"/>
    </location>
    <ligand>
        <name>tRNA</name>
        <dbReference type="ChEBI" id="CHEBI:17843"/>
    </ligand>
</feature>
<feature type="binding site" evidence="1">
    <location>
        <position position="68"/>
    </location>
    <ligand>
        <name>tRNA</name>
        <dbReference type="ChEBI" id="CHEBI:17843"/>
    </ligand>
</feature>
<feature type="binding site" evidence="1">
    <location>
        <position position="114"/>
    </location>
    <ligand>
        <name>tRNA</name>
        <dbReference type="ChEBI" id="CHEBI:17843"/>
    </ligand>
</feature>
<feature type="site" description="Discriminates between blocked and unblocked aminoacyl-tRNA" evidence="1">
    <location>
        <position position="10"/>
    </location>
</feature>
<feature type="site" description="Stabilizes the basic form of H active site to accept a proton" evidence="1">
    <location>
        <position position="93"/>
    </location>
</feature>
<comment type="function">
    <text evidence="1">Hydrolyzes ribosome-free peptidyl-tRNAs (with 1 or more amino acids incorporated), which drop off the ribosome during protein synthesis, or as a result of ribosome stalling.</text>
</comment>
<comment type="function">
    <text evidence="1">Catalyzes the release of premature peptidyl moieties from peptidyl-tRNA molecules trapped in stalled 50S ribosomal subunits, and thus maintains levels of free tRNAs and 50S ribosomes.</text>
</comment>
<comment type="catalytic activity">
    <reaction evidence="1">
        <text>an N-acyl-L-alpha-aminoacyl-tRNA + H2O = an N-acyl-L-amino acid + a tRNA + H(+)</text>
        <dbReference type="Rhea" id="RHEA:54448"/>
        <dbReference type="Rhea" id="RHEA-COMP:10123"/>
        <dbReference type="Rhea" id="RHEA-COMP:13883"/>
        <dbReference type="ChEBI" id="CHEBI:15377"/>
        <dbReference type="ChEBI" id="CHEBI:15378"/>
        <dbReference type="ChEBI" id="CHEBI:59874"/>
        <dbReference type="ChEBI" id="CHEBI:78442"/>
        <dbReference type="ChEBI" id="CHEBI:138191"/>
        <dbReference type="EC" id="3.1.1.29"/>
    </reaction>
</comment>
<comment type="subunit">
    <text evidence="1">Monomer.</text>
</comment>
<comment type="subcellular location">
    <subcellularLocation>
        <location evidence="1">Cytoplasm</location>
    </subcellularLocation>
</comment>
<comment type="similarity">
    <text evidence="1">Belongs to the PTH family.</text>
</comment>
<protein>
    <recommendedName>
        <fullName evidence="1">Peptidyl-tRNA hydrolase</fullName>
        <shortName evidence="1">Pth</shortName>
        <ecNumber evidence="1">3.1.1.29</ecNumber>
    </recommendedName>
</protein>